<sequence length="401" mass="44568">MKKVVLAYSGGLDTSIIIPWLKENYGYEVIAMAADLGQGEELEPLHEKAIKSGASKLYIEDLQEEFVTDFIYPTLKAGAVYEGKYLLGTSFARPLIAQRLVEIAAKEGAVAIAHGATGKGNDQVRFELAVKALNPDLEIIAPWRIWDIKSREDAIDYAVERGIPVPVTKDRPYSMDRNVWHLSHEGGDLEDPWNEPKKDLYLLGVSPEDAPDEAEYLELDFEQGIPVSLNGEKLGPVQLLETLNEVGGKHGIGIVDMVENRLVGMKSRGVYETPGGTILYTAHQALEHLTLDRLTLHYKEQIALKYAELVYDGVWHSPLREALDAFVDVTQKNVTGTVRLKLYKGNCSLAGVKSPYSLYSEEFATFGRDGVYNQKDAEGFINLFGLPLKVRALMEKKSGLR</sequence>
<evidence type="ECO:0000255" key="1">
    <source>
        <dbReference type="HAMAP-Rule" id="MF_00005"/>
    </source>
</evidence>
<keyword id="KW-0028">Amino-acid biosynthesis</keyword>
<keyword id="KW-0055">Arginine biosynthesis</keyword>
<keyword id="KW-0067">ATP-binding</keyword>
<keyword id="KW-0963">Cytoplasm</keyword>
<keyword id="KW-0436">Ligase</keyword>
<keyword id="KW-0547">Nucleotide-binding</keyword>
<gene>
    <name evidence="1" type="primary">argG</name>
    <name type="ordered locus">Dhaf_0795</name>
</gene>
<feature type="chain" id="PRO_1000201679" description="Argininosuccinate synthase">
    <location>
        <begin position="1"/>
        <end position="401"/>
    </location>
</feature>
<feature type="binding site" evidence="1">
    <location>
        <begin position="7"/>
        <end position="15"/>
    </location>
    <ligand>
        <name>ATP</name>
        <dbReference type="ChEBI" id="CHEBI:30616"/>
    </ligand>
</feature>
<feature type="binding site" evidence="1">
    <location>
        <position position="34"/>
    </location>
    <ligand>
        <name>ATP</name>
        <dbReference type="ChEBI" id="CHEBI:30616"/>
    </ligand>
</feature>
<feature type="binding site" evidence="1">
    <location>
        <position position="85"/>
    </location>
    <ligand>
        <name>L-citrulline</name>
        <dbReference type="ChEBI" id="CHEBI:57743"/>
    </ligand>
</feature>
<feature type="binding site" evidence="1">
    <location>
        <position position="90"/>
    </location>
    <ligand>
        <name>L-citrulline</name>
        <dbReference type="ChEBI" id="CHEBI:57743"/>
    </ligand>
</feature>
<feature type="binding site" evidence="1">
    <location>
        <position position="115"/>
    </location>
    <ligand>
        <name>ATP</name>
        <dbReference type="ChEBI" id="CHEBI:30616"/>
    </ligand>
</feature>
<feature type="binding site" evidence="1">
    <location>
        <position position="117"/>
    </location>
    <ligand>
        <name>L-aspartate</name>
        <dbReference type="ChEBI" id="CHEBI:29991"/>
    </ligand>
</feature>
<feature type="binding site" evidence="1">
    <location>
        <position position="121"/>
    </location>
    <ligand>
        <name>L-aspartate</name>
        <dbReference type="ChEBI" id="CHEBI:29991"/>
    </ligand>
</feature>
<feature type="binding site" evidence="1">
    <location>
        <position position="121"/>
    </location>
    <ligand>
        <name>L-citrulline</name>
        <dbReference type="ChEBI" id="CHEBI:57743"/>
    </ligand>
</feature>
<feature type="binding site" evidence="1">
    <location>
        <position position="122"/>
    </location>
    <ligand>
        <name>L-aspartate</name>
        <dbReference type="ChEBI" id="CHEBI:29991"/>
    </ligand>
</feature>
<feature type="binding site" evidence="1">
    <location>
        <position position="125"/>
    </location>
    <ligand>
        <name>L-citrulline</name>
        <dbReference type="ChEBI" id="CHEBI:57743"/>
    </ligand>
</feature>
<feature type="binding site" evidence="1">
    <location>
        <position position="174"/>
    </location>
    <ligand>
        <name>L-citrulline</name>
        <dbReference type="ChEBI" id="CHEBI:57743"/>
    </ligand>
</feature>
<feature type="binding site" evidence="1">
    <location>
        <position position="183"/>
    </location>
    <ligand>
        <name>L-citrulline</name>
        <dbReference type="ChEBI" id="CHEBI:57743"/>
    </ligand>
</feature>
<feature type="binding site" evidence="1">
    <location>
        <position position="259"/>
    </location>
    <ligand>
        <name>L-citrulline</name>
        <dbReference type="ChEBI" id="CHEBI:57743"/>
    </ligand>
</feature>
<feature type="binding site" evidence="1">
    <location>
        <position position="271"/>
    </location>
    <ligand>
        <name>L-citrulline</name>
        <dbReference type="ChEBI" id="CHEBI:57743"/>
    </ligand>
</feature>
<name>ASSY_DESHD</name>
<organism>
    <name type="scientific">Desulfitobacterium hafniense (strain DSM 10664 / DCB-2)</name>
    <dbReference type="NCBI Taxonomy" id="272564"/>
    <lineage>
        <taxon>Bacteria</taxon>
        <taxon>Bacillati</taxon>
        <taxon>Bacillota</taxon>
        <taxon>Clostridia</taxon>
        <taxon>Eubacteriales</taxon>
        <taxon>Desulfitobacteriaceae</taxon>
        <taxon>Desulfitobacterium</taxon>
    </lineage>
</organism>
<comment type="catalytic activity">
    <reaction evidence="1">
        <text>L-citrulline + L-aspartate + ATP = 2-(N(omega)-L-arginino)succinate + AMP + diphosphate + H(+)</text>
        <dbReference type="Rhea" id="RHEA:10932"/>
        <dbReference type="ChEBI" id="CHEBI:15378"/>
        <dbReference type="ChEBI" id="CHEBI:29991"/>
        <dbReference type="ChEBI" id="CHEBI:30616"/>
        <dbReference type="ChEBI" id="CHEBI:33019"/>
        <dbReference type="ChEBI" id="CHEBI:57472"/>
        <dbReference type="ChEBI" id="CHEBI:57743"/>
        <dbReference type="ChEBI" id="CHEBI:456215"/>
        <dbReference type="EC" id="6.3.4.5"/>
    </reaction>
</comment>
<comment type="pathway">
    <text evidence="1">Amino-acid biosynthesis; L-arginine biosynthesis; L-arginine from L-ornithine and carbamoyl phosphate: step 2/3.</text>
</comment>
<comment type="subunit">
    <text evidence="1">Homotetramer.</text>
</comment>
<comment type="subcellular location">
    <subcellularLocation>
        <location evidence="1">Cytoplasm</location>
    </subcellularLocation>
</comment>
<comment type="similarity">
    <text evidence="1">Belongs to the argininosuccinate synthase family. Type 1 subfamily.</text>
</comment>
<reference key="1">
    <citation type="journal article" date="2012" name="BMC Microbiol.">
        <title>Genome sequence of Desulfitobacterium hafniense DCB-2, a Gram-positive anaerobe capable of dehalogenation and metal reduction.</title>
        <authorList>
            <person name="Kim S.H."/>
            <person name="Harzman C."/>
            <person name="Davis J.K."/>
            <person name="Hutcheson R."/>
            <person name="Broderick J.B."/>
            <person name="Marsh T.L."/>
            <person name="Tiedje J.M."/>
        </authorList>
    </citation>
    <scope>NUCLEOTIDE SEQUENCE [LARGE SCALE GENOMIC DNA]</scope>
    <source>
        <strain>DSM 10664 / DCB-2</strain>
    </source>
</reference>
<accession>B8FWX2</accession>
<protein>
    <recommendedName>
        <fullName evidence="1">Argininosuccinate synthase</fullName>
        <ecNumber evidence="1">6.3.4.5</ecNumber>
    </recommendedName>
    <alternativeName>
        <fullName evidence="1">Citrulline--aspartate ligase</fullName>
    </alternativeName>
</protein>
<dbReference type="EC" id="6.3.4.5" evidence="1"/>
<dbReference type="EMBL" id="CP001336">
    <property type="protein sequence ID" value="ACL18858.1"/>
    <property type="molecule type" value="Genomic_DNA"/>
</dbReference>
<dbReference type="SMR" id="B8FWX2"/>
<dbReference type="KEGG" id="dhd:Dhaf_0795"/>
<dbReference type="HOGENOM" id="CLU_032784_4_2_9"/>
<dbReference type="UniPathway" id="UPA00068">
    <property type="reaction ID" value="UER00113"/>
</dbReference>
<dbReference type="Proteomes" id="UP000007726">
    <property type="component" value="Chromosome"/>
</dbReference>
<dbReference type="GO" id="GO:0005737">
    <property type="term" value="C:cytoplasm"/>
    <property type="evidence" value="ECO:0007669"/>
    <property type="project" value="UniProtKB-SubCell"/>
</dbReference>
<dbReference type="GO" id="GO:0004055">
    <property type="term" value="F:argininosuccinate synthase activity"/>
    <property type="evidence" value="ECO:0007669"/>
    <property type="project" value="UniProtKB-UniRule"/>
</dbReference>
<dbReference type="GO" id="GO:0005524">
    <property type="term" value="F:ATP binding"/>
    <property type="evidence" value="ECO:0007669"/>
    <property type="project" value="UniProtKB-UniRule"/>
</dbReference>
<dbReference type="GO" id="GO:0000053">
    <property type="term" value="P:argininosuccinate metabolic process"/>
    <property type="evidence" value="ECO:0007669"/>
    <property type="project" value="TreeGrafter"/>
</dbReference>
<dbReference type="GO" id="GO:0006526">
    <property type="term" value="P:L-arginine biosynthetic process"/>
    <property type="evidence" value="ECO:0007669"/>
    <property type="project" value="UniProtKB-UniRule"/>
</dbReference>
<dbReference type="GO" id="GO:0000050">
    <property type="term" value="P:urea cycle"/>
    <property type="evidence" value="ECO:0007669"/>
    <property type="project" value="TreeGrafter"/>
</dbReference>
<dbReference type="CDD" id="cd01999">
    <property type="entry name" value="ASS"/>
    <property type="match status" value="1"/>
</dbReference>
<dbReference type="FunFam" id="3.40.50.620:FF:000019">
    <property type="entry name" value="Argininosuccinate synthase"/>
    <property type="match status" value="1"/>
</dbReference>
<dbReference type="FunFam" id="3.90.1260.10:FF:000007">
    <property type="entry name" value="Argininosuccinate synthase"/>
    <property type="match status" value="1"/>
</dbReference>
<dbReference type="Gene3D" id="3.90.1260.10">
    <property type="entry name" value="Argininosuccinate synthetase, chain A, domain 2"/>
    <property type="match status" value="1"/>
</dbReference>
<dbReference type="Gene3D" id="3.40.50.620">
    <property type="entry name" value="HUPs"/>
    <property type="match status" value="1"/>
</dbReference>
<dbReference type="Gene3D" id="1.20.5.470">
    <property type="entry name" value="Single helix bin"/>
    <property type="match status" value="1"/>
</dbReference>
<dbReference type="HAMAP" id="MF_00005">
    <property type="entry name" value="Arg_succ_synth_type1"/>
    <property type="match status" value="1"/>
</dbReference>
<dbReference type="InterPro" id="IPR048268">
    <property type="entry name" value="Arginosuc_syn_C"/>
</dbReference>
<dbReference type="InterPro" id="IPR048267">
    <property type="entry name" value="Arginosuc_syn_N"/>
</dbReference>
<dbReference type="InterPro" id="IPR001518">
    <property type="entry name" value="Arginosuc_synth"/>
</dbReference>
<dbReference type="InterPro" id="IPR018223">
    <property type="entry name" value="Arginosuc_synth_CS"/>
</dbReference>
<dbReference type="InterPro" id="IPR023434">
    <property type="entry name" value="Arginosuc_synth_type_1_subfam"/>
</dbReference>
<dbReference type="InterPro" id="IPR024074">
    <property type="entry name" value="AS_cat/multimer_dom_body"/>
</dbReference>
<dbReference type="InterPro" id="IPR014729">
    <property type="entry name" value="Rossmann-like_a/b/a_fold"/>
</dbReference>
<dbReference type="NCBIfam" id="TIGR00032">
    <property type="entry name" value="argG"/>
    <property type="match status" value="1"/>
</dbReference>
<dbReference type="NCBIfam" id="NF001770">
    <property type="entry name" value="PRK00509.1"/>
    <property type="match status" value="1"/>
</dbReference>
<dbReference type="PANTHER" id="PTHR11587">
    <property type="entry name" value="ARGININOSUCCINATE SYNTHASE"/>
    <property type="match status" value="1"/>
</dbReference>
<dbReference type="PANTHER" id="PTHR11587:SF2">
    <property type="entry name" value="ARGININOSUCCINATE SYNTHASE"/>
    <property type="match status" value="1"/>
</dbReference>
<dbReference type="Pfam" id="PF20979">
    <property type="entry name" value="Arginosuc_syn_C"/>
    <property type="match status" value="1"/>
</dbReference>
<dbReference type="Pfam" id="PF00764">
    <property type="entry name" value="Arginosuc_synth"/>
    <property type="match status" value="1"/>
</dbReference>
<dbReference type="SUPFAM" id="SSF52402">
    <property type="entry name" value="Adenine nucleotide alpha hydrolases-like"/>
    <property type="match status" value="1"/>
</dbReference>
<dbReference type="SUPFAM" id="SSF69864">
    <property type="entry name" value="Argininosuccinate synthetase, C-terminal domain"/>
    <property type="match status" value="1"/>
</dbReference>
<dbReference type="PROSITE" id="PS00564">
    <property type="entry name" value="ARGININOSUCCIN_SYN_1"/>
    <property type="match status" value="1"/>
</dbReference>
<dbReference type="PROSITE" id="PS00565">
    <property type="entry name" value="ARGININOSUCCIN_SYN_2"/>
    <property type="match status" value="1"/>
</dbReference>
<proteinExistence type="inferred from homology"/>